<protein>
    <recommendedName>
        <fullName evidence="1">Transcription elongation factor GreB</fullName>
    </recommendedName>
    <alternativeName>
        <fullName evidence="1">Transcript cleavage factor GreB</fullName>
    </alternativeName>
</protein>
<proteinExistence type="inferred from homology"/>
<dbReference type="EMBL" id="AE016853">
    <property type="protein sequence ID" value="AAO55779.1"/>
    <property type="molecule type" value="Genomic_DNA"/>
</dbReference>
<dbReference type="RefSeq" id="NP_792084.1">
    <property type="nucleotide sequence ID" value="NC_004578.1"/>
</dbReference>
<dbReference type="RefSeq" id="WP_005617338.1">
    <property type="nucleotide sequence ID" value="NC_004578.1"/>
</dbReference>
<dbReference type="SMR" id="Q883T5"/>
<dbReference type="STRING" id="223283.PSPTO_2265"/>
<dbReference type="GeneID" id="61789097"/>
<dbReference type="KEGG" id="pst:PSPTO_2265"/>
<dbReference type="PATRIC" id="fig|223283.9.peg.2299"/>
<dbReference type="eggNOG" id="COG0782">
    <property type="taxonomic scope" value="Bacteria"/>
</dbReference>
<dbReference type="HOGENOM" id="CLU_101379_3_0_6"/>
<dbReference type="OrthoDB" id="5511940at2"/>
<dbReference type="PhylomeDB" id="Q883T5"/>
<dbReference type="Proteomes" id="UP000002515">
    <property type="component" value="Chromosome"/>
</dbReference>
<dbReference type="GO" id="GO:0003677">
    <property type="term" value="F:DNA binding"/>
    <property type="evidence" value="ECO:0007669"/>
    <property type="project" value="UniProtKB-UniRule"/>
</dbReference>
<dbReference type="GO" id="GO:0070063">
    <property type="term" value="F:RNA polymerase binding"/>
    <property type="evidence" value="ECO:0007669"/>
    <property type="project" value="InterPro"/>
</dbReference>
<dbReference type="GO" id="GO:0006354">
    <property type="term" value="P:DNA-templated transcription elongation"/>
    <property type="evidence" value="ECO:0007669"/>
    <property type="project" value="TreeGrafter"/>
</dbReference>
<dbReference type="GO" id="GO:0032784">
    <property type="term" value="P:regulation of DNA-templated transcription elongation"/>
    <property type="evidence" value="ECO:0007669"/>
    <property type="project" value="UniProtKB-UniRule"/>
</dbReference>
<dbReference type="FunFam" id="1.10.287.180:FF:000001">
    <property type="entry name" value="Transcription elongation factor GreA"/>
    <property type="match status" value="1"/>
</dbReference>
<dbReference type="FunFam" id="3.10.50.30:FF:000001">
    <property type="entry name" value="Transcription elongation factor GreA"/>
    <property type="match status" value="1"/>
</dbReference>
<dbReference type="Gene3D" id="3.10.50.30">
    <property type="entry name" value="Transcription elongation factor, GreA/GreB, C-terminal domain"/>
    <property type="match status" value="1"/>
</dbReference>
<dbReference type="Gene3D" id="1.10.287.180">
    <property type="entry name" value="Transcription elongation factor, GreA/GreB, N-terminal domain"/>
    <property type="match status" value="1"/>
</dbReference>
<dbReference type="HAMAP" id="MF_00105">
    <property type="entry name" value="GreA_GreB"/>
    <property type="match status" value="1"/>
</dbReference>
<dbReference type="HAMAP" id="MF_00930">
    <property type="entry name" value="GreB"/>
    <property type="match status" value="1"/>
</dbReference>
<dbReference type="InterPro" id="IPR036953">
    <property type="entry name" value="GreA/GreB_C_sf"/>
</dbReference>
<dbReference type="InterPro" id="IPR018151">
    <property type="entry name" value="TF_GreA/GreB_CS"/>
</dbReference>
<dbReference type="InterPro" id="IPR028624">
    <property type="entry name" value="Tscrpt_elong_fac_GreA/B"/>
</dbReference>
<dbReference type="InterPro" id="IPR001437">
    <property type="entry name" value="Tscrpt_elong_fac_GreA/B_C"/>
</dbReference>
<dbReference type="InterPro" id="IPR023459">
    <property type="entry name" value="Tscrpt_elong_fac_GreA/B_fam"/>
</dbReference>
<dbReference type="InterPro" id="IPR022691">
    <property type="entry name" value="Tscrpt_elong_fac_GreA/B_N"/>
</dbReference>
<dbReference type="InterPro" id="IPR036805">
    <property type="entry name" value="Tscrpt_elong_fac_GreA/B_N_sf"/>
</dbReference>
<dbReference type="InterPro" id="IPR006358">
    <property type="entry name" value="Tscrpt_elong_fac_GreB"/>
</dbReference>
<dbReference type="NCBIfam" id="TIGR01461">
    <property type="entry name" value="greB"/>
    <property type="match status" value="1"/>
</dbReference>
<dbReference type="NCBIfam" id="NF002506">
    <property type="entry name" value="PRK01885.1"/>
    <property type="match status" value="1"/>
</dbReference>
<dbReference type="PANTHER" id="PTHR30437">
    <property type="entry name" value="TRANSCRIPTION ELONGATION FACTOR GREA"/>
    <property type="match status" value="1"/>
</dbReference>
<dbReference type="PANTHER" id="PTHR30437:SF6">
    <property type="entry name" value="TRANSCRIPTION ELONGATION FACTOR GREB"/>
    <property type="match status" value="1"/>
</dbReference>
<dbReference type="Pfam" id="PF01272">
    <property type="entry name" value="GreA_GreB"/>
    <property type="match status" value="1"/>
</dbReference>
<dbReference type="Pfam" id="PF03449">
    <property type="entry name" value="GreA_GreB_N"/>
    <property type="match status" value="1"/>
</dbReference>
<dbReference type="PIRSF" id="PIRSF006092">
    <property type="entry name" value="GreA_GreB"/>
    <property type="match status" value="1"/>
</dbReference>
<dbReference type="SUPFAM" id="SSF54534">
    <property type="entry name" value="FKBP-like"/>
    <property type="match status" value="1"/>
</dbReference>
<dbReference type="SUPFAM" id="SSF46557">
    <property type="entry name" value="GreA transcript cleavage protein, N-terminal domain"/>
    <property type="match status" value="1"/>
</dbReference>
<dbReference type="PROSITE" id="PS00829">
    <property type="entry name" value="GREAB_1"/>
    <property type="match status" value="1"/>
</dbReference>
<dbReference type="PROSITE" id="PS00830">
    <property type="entry name" value="GREAB_2"/>
    <property type="match status" value="1"/>
</dbReference>
<comment type="function">
    <text evidence="1">Necessary for efficient RNA polymerase transcription elongation past template-encoded arresting sites. The arresting sites in DNA have the property of trapping a certain fraction of elongating RNA polymerases that pass through, resulting in locked ternary complexes. Cleavage of the nascent transcript by cleavage factors such as GreA or GreB allows the resumption of elongation from the new 3'terminus. GreB releases sequences of up to 9 nucleotides in length.</text>
</comment>
<comment type="similarity">
    <text evidence="1">Belongs to the GreA/GreB family. GreB subfamily.</text>
</comment>
<reference key="1">
    <citation type="journal article" date="2003" name="Proc. Natl. Acad. Sci. U.S.A.">
        <title>The complete genome sequence of the Arabidopsis and tomato pathogen Pseudomonas syringae pv. tomato DC3000.</title>
        <authorList>
            <person name="Buell C.R."/>
            <person name="Joardar V."/>
            <person name="Lindeberg M."/>
            <person name="Selengut J."/>
            <person name="Paulsen I.T."/>
            <person name="Gwinn M.L."/>
            <person name="Dodson R.J."/>
            <person name="DeBoy R.T."/>
            <person name="Durkin A.S."/>
            <person name="Kolonay J.F."/>
            <person name="Madupu R."/>
            <person name="Daugherty S.C."/>
            <person name="Brinkac L.M."/>
            <person name="Beanan M.J."/>
            <person name="Haft D.H."/>
            <person name="Nelson W.C."/>
            <person name="Davidsen T.M."/>
            <person name="Zafar N."/>
            <person name="Zhou L."/>
            <person name="Liu J."/>
            <person name="Yuan Q."/>
            <person name="Khouri H.M."/>
            <person name="Fedorova N.B."/>
            <person name="Tran B."/>
            <person name="Russell D."/>
            <person name="Berry K.J."/>
            <person name="Utterback T.R."/>
            <person name="Van Aken S.E."/>
            <person name="Feldblyum T.V."/>
            <person name="D'Ascenzo M."/>
            <person name="Deng W.-L."/>
            <person name="Ramos A.R."/>
            <person name="Alfano J.R."/>
            <person name="Cartinhour S."/>
            <person name="Chatterjee A.K."/>
            <person name="Delaney T.P."/>
            <person name="Lazarowitz S.G."/>
            <person name="Martin G.B."/>
            <person name="Schneider D.J."/>
            <person name="Tang X."/>
            <person name="Bender C.L."/>
            <person name="White O."/>
            <person name="Fraser C.M."/>
            <person name="Collmer A."/>
        </authorList>
    </citation>
    <scope>NUCLEOTIDE SEQUENCE [LARGE SCALE GENOMIC DNA]</scope>
    <source>
        <strain>ATCC BAA-871 / DC3000</strain>
    </source>
</reference>
<gene>
    <name evidence="1" type="primary">greB</name>
    <name type="ordered locus">PSPTO_2265</name>
</gene>
<keyword id="KW-0175">Coiled coil</keyword>
<keyword id="KW-0238">DNA-binding</keyword>
<keyword id="KW-1185">Reference proteome</keyword>
<keyword id="KW-0804">Transcription</keyword>
<keyword id="KW-0805">Transcription regulation</keyword>
<name>GREB_PSESM</name>
<feature type="chain" id="PRO_0000176957" description="Transcription elongation factor GreB">
    <location>
        <begin position="1"/>
        <end position="157"/>
    </location>
</feature>
<feature type="coiled-coil region" evidence="1">
    <location>
        <begin position="52"/>
        <end position="73"/>
    </location>
</feature>
<organism>
    <name type="scientific">Pseudomonas syringae pv. tomato (strain ATCC BAA-871 / DC3000)</name>
    <dbReference type="NCBI Taxonomy" id="223283"/>
    <lineage>
        <taxon>Bacteria</taxon>
        <taxon>Pseudomonadati</taxon>
        <taxon>Pseudomonadota</taxon>
        <taxon>Gammaproteobacteria</taxon>
        <taxon>Pseudomonadales</taxon>
        <taxon>Pseudomonadaceae</taxon>
        <taxon>Pseudomonas</taxon>
    </lineage>
</organism>
<accession>Q883T5</accession>
<sequence length="157" mass="18546">MSTKIITQGGHEALKKELDYLWREHRPDITQKVAWAASLGDRSENADYQYNKKLLREIDRRVRYLRKRLEDMRVVQYSPEQEGRVFFGAWVEIENEAGDLKKFRVVGYDEIYGRNDYISIDSPMARALLKKEVGDEVLVNTPEGEKLWFVNSIVYER</sequence>
<evidence type="ECO:0000255" key="1">
    <source>
        <dbReference type="HAMAP-Rule" id="MF_00930"/>
    </source>
</evidence>